<sequence length="167" mass="17289">MTHRSSRLEVGPVARGDVATIEHAELPPGWVLTTSGRISGVTEPGELSVHYPFPIADLVALDDALTYSSRACQVRFAIYLGDLGRDTAARAREILGKVPTPDNAVLLAVSPNQCAIEVVYGSQVRGRGAESAAPLGVAAASSAFEQGELVDGLISAIRVLSAGIAPG</sequence>
<protein>
    <recommendedName>
        <fullName>Uncharacterized protein MT2543</fullName>
    </recommendedName>
</protein>
<feature type="chain" id="PRO_0000427512" description="Uncharacterized protein MT2543">
    <location>
        <begin position="1"/>
        <end position="167"/>
    </location>
</feature>
<dbReference type="EMBL" id="AE000516">
    <property type="protein sequence ID" value="AAK46843.1"/>
    <property type="molecule type" value="Genomic_DNA"/>
</dbReference>
<dbReference type="PIR" id="C70866">
    <property type="entry name" value="C70866"/>
</dbReference>
<dbReference type="SMR" id="P9WLA6"/>
<dbReference type="KEGG" id="mtc:MT2543"/>
<dbReference type="PATRIC" id="fig|83331.31.peg.2744"/>
<dbReference type="HOGENOM" id="CLU_129852_0_0_11"/>
<dbReference type="Proteomes" id="UP000001020">
    <property type="component" value="Chromosome"/>
</dbReference>
<dbReference type="InterPro" id="IPR033437">
    <property type="entry name" value="DUF5130"/>
</dbReference>
<dbReference type="Pfam" id="PF17174">
    <property type="entry name" value="DUF5130"/>
    <property type="match status" value="1"/>
</dbReference>
<proteinExistence type="predicted"/>
<organism>
    <name type="scientific">Mycobacterium tuberculosis (strain CDC 1551 / Oshkosh)</name>
    <dbReference type="NCBI Taxonomy" id="83331"/>
    <lineage>
        <taxon>Bacteria</taxon>
        <taxon>Bacillati</taxon>
        <taxon>Actinomycetota</taxon>
        <taxon>Actinomycetes</taxon>
        <taxon>Mycobacteriales</taxon>
        <taxon>Mycobacteriaceae</taxon>
        <taxon>Mycobacterium</taxon>
        <taxon>Mycobacterium tuberculosis complex</taxon>
    </lineage>
</organism>
<reference key="1">
    <citation type="journal article" date="2002" name="J. Bacteriol.">
        <title>Whole-genome comparison of Mycobacterium tuberculosis clinical and laboratory strains.</title>
        <authorList>
            <person name="Fleischmann R.D."/>
            <person name="Alland D."/>
            <person name="Eisen J.A."/>
            <person name="Carpenter L."/>
            <person name="White O."/>
            <person name="Peterson J.D."/>
            <person name="DeBoy R.T."/>
            <person name="Dodson R.J."/>
            <person name="Gwinn M.L."/>
            <person name="Haft D.H."/>
            <person name="Hickey E.K."/>
            <person name="Kolonay J.F."/>
            <person name="Nelson W.C."/>
            <person name="Umayam L.A."/>
            <person name="Ermolaeva M.D."/>
            <person name="Salzberg S.L."/>
            <person name="Delcher A."/>
            <person name="Utterback T.R."/>
            <person name="Weidman J.F."/>
            <person name="Khouri H.M."/>
            <person name="Gill J."/>
            <person name="Mikula A."/>
            <person name="Bishai W."/>
            <person name="Jacobs W.R. Jr."/>
            <person name="Venter J.C."/>
            <person name="Fraser C.M."/>
        </authorList>
    </citation>
    <scope>NUCLEOTIDE SEQUENCE [LARGE SCALE GENOMIC DNA]</scope>
    <source>
        <strain>CDC 1551 / Oshkosh</strain>
    </source>
</reference>
<gene>
    <name type="ordered locus">MT2543</name>
</gene>
<name>Y2468_MYCTO</name>
<keyword id="KW-1185">Reference proteome</keyword>
<accession>P9WLA6</accession>
<accession>L0T9W6</accession>
<accession>O53195</accession>
<accession>Q7D735</accession>